<feature type="chain" id="PRO_0000435107" description="NACHT, LRR and PYD domains-containing protein 1b allele 5">
    <location>
        <begin position="1"/>
        <end position="1196"/>
    </location>
</feature>
<feature type="chain" id="PRO_0000452859" description="NACHT, LRR and PYD domains-containing protein 1b, N-terminus" evidence="1">
    <location>
        <begin position="1"/>
        <end position="922"/>
    </location>
</feature>
<feature type="chain" id="PRO_0000452860" description="NACHT, LRR and PYD domains-containing protein 1b, C-terminus" evidence="1">
    <location>
        <begin position="923"/>
        <end position="1196"/>
    </location>
</feature>
<feature type="domain" description="NACHT" evidence="4">
    <location>
        <begin position="126"/>
        <end position="435"/>
    </location>
</feature>
<feature type="repeat" description="LRR 1">
    <location>
        <begin position="627"/>
        <end position="647"/>
    </location>
</feature>
<feature type="repeat" description="LRR 2">
    <location>
        <begin position="684"/>
        <end position="704"/>
    </location>
</feature>
<feature type="domain" description="FIIND" evidence="5">
    <location>
        <begin position="789"/>
        <end position="1072"/>
    </location>
</feature>
<feature type="domain" description="CARD" evidence="3">
    <location>
        <begin position="1106"/>
        <end position="1189"/>
    </location>
</feature>
<feature type="region of interest" description="Disordered" evidence="6">
    <location>
        <begin position="1"/>
        <end position="22"/>
    </location>
</feature>
<feature type="region of interest" description="ZU5" evidence="2">
    <location>
        <begin position="789"/>
        <end position="922"/>
    </location>
</feature>
<feature type="region of interest" description="UPA" evidence="2">
    <location>
        <begin position="923"/>
        <end position="1072"/>
    </location>
</feature>
<feature type="binding site" evidence="4">
    <location>
        <begin position="132"/>
        <end position="139"/>
    </location>
    <ligand>
        <name>ATP</name>
        <dbReference type="ChEBI" id="CHEBI:30616"/>
    </ligand>
</feature>
<feature type="site" description="Probable cleavage; by anthrax lethal toxin endopeptidase component" evidence="1">
    <location>
        <begin position="44"/>
        <end position="45"/>
    </location>
</feature>
<feature type="site" description="Trigger for autolytic processing" evidence="2">
    <location>
        <position position="896"/>
    </location>
</feature>
<feature type="site" description="Cleavage; by autolysis" evidence="2 5">
    <location>
        <begin position="922"/>
        <end position="923"/>
    </location>
</feature>
<feature type="splice variant" id="VSP_058010" description="In isoform 2.">
    <location>
        <begin position="1061"/>
        <end position="1084"/>
    </location>
</feature>
<evidence type="ECO:0000250" key="1">
    <source>
        <dbReference type="UniProtKB" id="Q2LKW6"/>
    </source>
</evidence>
<evidence type="ECO:0000250" key="2">
    <source>
        <dbReference type="UniProtKB" id="Q9C000"/>
    </source>
</evidence>
<evidence type="ECO:0000255" key="3">
    <source>
        <dbReference type="PROSITE-ProRule" id="PRU00046"/>
    </source>
</evidence>
<evidence type="ECO:0000255" key="4">
    <source>
        <dbReference type="PROSITE-ProRule" id="PRU00136"/>
    </source>
</evidence>
<evidence type="ECO:0000255" key="5">
    <source>
        <dbReference type="PROSITE-ProRule" id="PRU01174"/>
    </source>
</evidence>
<evidence type="ECO:0000256" key="6">
    <source>
        <dbReference type="SAM" id="MobiDB-lite"/>
    </source>
</evidence>
<evidence type="ECO:0000269" key="7">
    <source>
    </source>
</evidence>
<evidence type="ECO:0000269" key="8">
    <source>
    </source>
</evidence>
<evidence type="ECO:0000269" key="9">
    <source>
    </source>
</evidence>
<evidence type="ECO:0000269" key="10">
    <source>
    </source>
</evidence>
<evidence type="ECO:0000303" key="11">
    <source>
    </source>
</evidence>
<evidence type="ECO:0000305" key="12"/>
<evidence type="ECO:0000305" key="13">
    <source>
    </source>
</evidence>
<evidence type="ECO:0000305" key="14">
    <source>
    </source>
</evidence>
<evidence type="ECO:0000305" key="15">
    <source>
    </source>
</evidence>
<evidence type="ECO:0000312" key="16">
    <source>
        <dbReference type="EMBL" id="ABI18116.1"/>
    </source>
</evidence>
<proteinExistence type="evidence at protein level"/>
<accession>Q0GKD5</accession>
<accession>Q2LKV0</accession>
<gene>
    <name type="primary">Nlrp1b</name>
    <name type="synonym">Nalp1b</name>
</gene>
<name>NL1B5_MOUSE</name>
<sequence>MEESPPKQKSNTKVTQHEGQQDLNTTRHMNVELKHRPKLERHLKLGMIPVVYMKQGEEILYPAQSLREENLIQNFTSLLLLQKLCPKDPENMVRKSWASCVPEEGGHMINIQDLFGPNIGTQKEPQLVIIEGAAGIGKSTLARLVKRAWKEGQLYRDHFQHVFFFSCRELAQCKKLSLAELIAQGQEVPTAPINQILSHPEKLLFILDGIDEPAWVLADQNPELCLHWSQRQPVHTLLGSLLGKSIFPEAFFLLTTRTTALQKFIPSLPMPCQVEVLGFSGIERENYFYKYFANQRHAITAFMMVESNPVLLTLCEVPWVCWLVCTCLKKQMEQGRVLSLKSQTTTALCLKYLSLTIPDKHRRTQVKALCSLAAEGIWKRRTLFSESDLCKQGLDEDAVATFLKTGVLQKQASSLSYSFAHLCLQEFFAAISCILEDSEERHGNMEMDRIVETLVERYGRQNLFEAPTVRFLFGLLGKEGVKGMEKLFSCSLHGKTNLKLLWHILVKSQPHQPPCLGLLHCLYENQDMELLTHVMHDLQGTIVPGPNDIAHTVLQTNVKHLVVQTDMELMVATFCIQFYCHVRTLQLNMEKQQGYALISPRMVLYRWTPITNASWEILFYNLKFTRNLEGLDLSGNSLRYSVVQSLCNTLRYPGCQLKTLWLVKCGLTSRHCSLLASVLSAHSSLTELYLQLNDLGDDGVRMLCEGLRNPVCNLSILWLDLYSLSAQVITELRTLEEKNPKLYIRSIWMPHMMVPTENMDEEAILTTFKQQRQEPGDKPMEILGTEEDFWGPTGPVATELVDRVRNLYRVQLPMAGSYHCPSTGLHFVVTRAVTIEIEFCAWSQFLDKTPLQQSHMVVGPLFDIKAEQGAVTAVYLPHFVSLKDTEASTFDFKVAHFQEHGMVLETPDRVKPGYTVLKNPSFSPMGVVLRIIPAARHFIPITSITLIYYRLNLEEVTLHLYLVPNDCTIQKAIDDEEMKFQFVRINKPPPVDNLFIGSRYIVSGSENLEITPKELELCYRSSKEFQLFSEIYVGNMGSEIKLQIKNKKHMKLIWEALLKPEFKFDHLCDQEFCTILKNIMISPAGDLRPALPRIAQALKDAPSLLHFMDQHREQLVARVTSVDPLLDKLHGLVLNEESYEAVRAENTNQDKMRKLFNLSRSWSRACKDLFYQALKETHPHLVMDLFEKSGGVSLGS</sequence>
<comment type="function">
    <text evidence="1 7 9 10">Acts as the sensor component of the Nlrp1b inflammasome, which mediates inflammasome activation in response to various pathogen-associated signals, leading to subsequent pyroptosis (By similarity). Inflammasomes are supramolecular complexes that assemble in the cytosol in response to pathogens and other damage-associated signals and play critical roles in innate immunity and inflammation (By similarity). Acts as a recognition receptor (PRR): recognizes specific pathogens and other damage-associated signals, such as B.anthracis lethal toxin (LT) or Val-boroPro inhibitor, and mediates the formation of the inflammasome polymeric complex (PubMed:16429160, PubMed:31383852). In response to pathogen-associated signals, the N-terminal part of Nlrp1b is degraded by the proteasome, releasing the cleaved C-terminal part of the protein (NACHT, LRR and PYD domains-containing protein 1b, C-terminus), which polymerizes to initiate the formation of the inflammasome complex: the inflammasome directly recruits pro-caspase-1 (proCASP1) independently of PYCARD/ASC and promotes caspase-1 (CASP1) activation, which subsequently cleaves and activates inflammatory cytokines IL1B and IL18 and gasdermin-D (GSDMD), leading to pyroptosis (By similarity). In the absence of GSDMD expression, the Nlrp1b inflammasome is able to recruit and activate CASP8, leading to activation of gasdermin-E (GSDME) (By similarity). Activation of Nlrp1b inflammasome is also required for HMGB1 secretion; the active cytokines and HMGB1 stimulate inflammatory responses (By similarity). Primary mediator of macrophage susceptibility to B.anthracis LT: in response to B.anthracis infection, macrophages and dendritic cells release IL1B and undergo pyroptosis (PubMed:16429160, PubMed:24935976). This early inflammatory response to the toxin increases resistance to infection by B.anthracis spores (PubMed:16429160, PubMed:24935976).</text>
</comment>
<comment type="function">
    <molecule>NACHT, LRR and PYD domains-containing protein 1b allele 5</molecule>
    <text evidence="1">Constitutes the precursor of the Nlrp1b inflammasome, which mediates autoproteolytic processing within the FIIND domain to generate the N-terminal and C-terminal parts, which are associated non-covalently in absence of pathogens and other damage-associated signals.</text>
</comment>
<comment type="function">
    <molecule>NACHT, LRR and PYD domains-containing protein 1b, N-terminus</molecule>
    <text evidence="1">Regulatory part that prevents formation of the Nlrp1b inflammasome: in absence of pathogens and other damage-associated signals, interacts with the C-terminal part of Nlrp1b (NACHT, LRR and PYD domains-containing protein 1b, C-terminus), preventing activation of the Nlrp1b inflammasome. In response to pathogen-associated signals, this part is ubiquitinated by the N-end rule pathway and degraded by the proteasome, releasing the cleaved C-terminal part of the protein, which polymerizes and forms the Nlrp1b inflammasome.</text>
</comment>
<comment type="function">
    <molecule>NACHT, LRR and PYD domains-containing protein 1b, C-terminus</molecule>
    <text evidence="1">Constitutes the active part of the Nlrp1b inflammasome. In absence of pathogens and other damage-associated signals, interacts with the N-terminal part of Nlrp1b (NACHT, LRR and PYD domains-containing protein 1b, N-terminus), preventing activation of the Nlrp1b inflammasome. In response to pathogen-associated signals, the N-terminal part of Nlrp1b is degraded by the proteasome, releasing this form, which polymerizes to form the Nlrp1b inflammasome complex: the Nlrp1b inflammasome complex then directly recruits pro-caspase-1 (proCASP1) and promotes caspase-1 (CASP1) activation, leading to gasdermin-D (GSDMD) cleavage and subsequent pyroptosis.</text>
</comment>
<comment type="activity regulation">
    <text evidence="1 2 7 9 10">Activated by cleavage by B.anthracis lethal toxin (LT) endopeptidase (PubMed:16429160, PubMed:24935976). Cleavage by LT promotes ubiquitination and degradation of the N-terminal part, releasing the cleaved C-terminal part of the protein (NACHT, LRR and PYD domains-containing protein 1b, C-terminus), which polymerizes and forms the Nlrp1b inflammasome (By similarity). Nlrp1b inflammasome is inhibited by DPP8 and DPP9, which sequester the C-terminal fragment of Nlrp1b (NACHT, LRR and PYD domains-containing protein 1b, C-terminus) in a ternary complex, thereby preventing Nlrp1b oligomerization and activation (By similarity). Nlrp1b inflammasome is activated by Val-boroPro (Talabostat, PT-100), an inhibitor of dipeptidyl peptidases DPP8 and DPP9 (PubMed:31383852). Val-boroPro relieves inhibition of DPP8 and/or DPP9 by promoting disruption of the ternary complex, releasing its C-terminal part from autoinhibition (By similarity). Activated by metabolic inhibitors, such as 2-deoxy-D-glucose and sodium azide (PubMed:24935976). Not activated by muramyl dipeptide, nor by full-length bacterial peptidoglycan (PubMed:24935976).</text>
</comment>
<comment type="subunit">
    <text evidence="1 2">Interacts with DPP9; leading to inhibit activation of the inflammasome (By similarity). DPP9 acts via formation of a ternary complex, composed of a DPP9 homodimer, one full-length Nlrp1b protein, and one cleaved C-terminus of Nlrp1b (NACHT, LRR and PYD domains-containing protein 1b, C-terminus) (By similarity). Interacts with DPP8; leading to inhibit activation of the inflammasome, probably via formation of a ternary complex with DPP8 (By similarity). Interacts (via LRR repeats) with BCL2 and BCL2L1 (via the loop between motifs BH4 and BH3). Interacts with NOD2; this interaction may increase IL1B release (By similarity). Interacts with EIF2AK2/PKR; this interaction requires EIF2AK2 activity, is accompanied by EIF2AK2 autophosphorylation and promotes inflammasome assembly in response to B.anthracis lethal toxin (By similarity). Interacts with MEFV; this interaction targets Nlrp1b to degradation by autophagy, hence preventing excessive IL1B- and IL18-mediated inflammation (By similarity).</text>
</comment>
<comment type="subunit">
    <molecule>NACHT, LRR and PYD domains-containing protein 1b, N-terminus</molecule>
    <text evidence="1">Interacts with the C-terminal part of Nlrp1b (NACHT, LRR and PYD domains-containing protein 1b, C-terminus) in absence of pathogens and other damage-associated signals.</text>
</comment>
<comment type="subunit">
    <molecule>NACHT, LRR and PYD domains-containing protein 1b, C-terminus</molecule>
    <text evidence="1">Interacts with the N-terminal part of Nlrp1b (NACHT, LRR and PYD domains-containing protein 1b, N-terminus) in absence of pathogens and other damage-associated signals (By similarity). Homomultimer; forms the Nlrp1b inflammasome polymeric complex, a filament composed of homopolymers of this form in response to pathogens and other damage-associated signals. The Nlrp1b inflammasome polymeric complex directly recruits pro-caspase-1 (proCASP1) independently of PYCARD/ASC. Interacts (via CARD domain) with CASP1 (via CARD domain); leading to CASP1 activation (By similarity).</text>
</comment>
<comment type="subcellular location">
    <subcellularLocation>
        <location evidence="1">Cytoplasm</location>
        <location evidence="1">Cytosol</location>
    </subcellularLocation>
</comment>
<comment type="subcellular location">
    <molecule>NACHT, LRR and PYD domains-containing protein 1b, C-terminus</molecule>
    <subcellularLocation>
        <location evidence="1">Inflammasome</location>
    </subcellularLocation>
</comment>
<comment type="alternative products">
    <event type="alternative splicing"/>
    <isoform>
        <id>Q0GKD5-1</id>
        <name>1</name>
        <sequence type="displayed"/>
    </isoform>
    <isoform>
        <id>Q0GKD5-2</id>
        <name>2</name>
        <sequence type="described" ref="VSP_058010"/>
    </isoform>
</comment>
<comment type="tissue specificity">
    <text evidence="7 8">Expressed in macrophages.</text>
</comment>
<comment type="domain">
    <text evidence="2">The CARD domain is involved in the interaction with CASP1 and CASP4/CASP11.</text>
</comment>
<comment type="domain">
    <text evidence="1">The leucine-rich repeat (LRR) domain may be involved in autoinhibition in the absence of activating signal, possibly through intramolecular interaction with the NACHT domain.</text>
</comment>
<comment type="domain">
    <text evidence="1">The FIIND (domain with function to find) region is involved in homomerization, but not in CASP1-binding. Autocatalytic cleavage in this region occurs constitutively, prior to activation signals, and is required for inflammasome activity (IL1B release), possibly by facilitating CASP1 binding. Both N- and C-terminal fragments remain associated.</text>
</comment>
<comment type="domain">
    <molecule>NACHT, LRR and PYD domains-containing protein 1b, C-terminus</molecule>
    <text evidence="2">The C-terminal part of Nlrp1b oligomerizes to form the core of the Nlrp1b inflammasome filament: in the filament, the CARD domains form a central helical filaments that are promoted by oligomerized, but flexibly linked, UPA regions surrounding the filaments. The UPA region reduces the threshold needed for filament formation and signaling.</text>
</comment>
<comment type="PTM">
    <molecule>NACHT, LRR and PYD domains-containing protein 1b allele 5</molecule>
    <text evidence="15">Autocatalytically cleaved. Autocatalytic cleavage in FIIND region occurs constitutively, prior to activation signals, and is required for inflammasome activity (IL1B release), possibly by facilitating CASP1 binding. Both N- and C-terminal parts remain associated non-covalently.</text>
</comment>
<comment type="PTM">
    <molecule>NACHT, LRR and PYD domains-containing protein 1b, N-terminus</molecule>
    <text evidence="1">Ubiquitinated by the N-end rule pathway in response to pathogens and other damage-associated signals, leading to its degradation by the proteasome and subsequent release of the cleaved C-terminal part of the protein (NACHT, LRR and PYD domains-containing protein 1b, C-terminus), which polymerizes and forms the Nlrp1b inflammasome.</text>
</comment>
<comment type="PTM">
    <molecule>NACHT, LRR and PYD domains-containing protein 1b, N-terminus</molecule>
    <text evidence="13 14">(Microbial infection) Cleavage by B.anthracis lethal toxin (LT) endopeptidase promotes ubiquitination and degradation of the N-terminal part, releasing the cleaved C-terminal part of the protein (NACHT, LRR and PYD domains-containing protein 1b, C-terminus), which polymerizes and forms the Nlrp1b inflammasome.</text>
</comment>
<comment type="polymorphism">
    <text evidence="7 11">Nlrp1b gene is extremely polymorphic. 5 alleles have been described in 18 inbred strains: 1 (AC Q2LKW6), 2 (AC A1Z198), 3 (AC Q2LKV5), 4 (AC Q2LKV2) and 5 (this entry). These alleles define susceptibility to B.anthracis lethal toxin (LT). Alleles 1 (carried by strains 129S1/SvImJ, BALB/cJ, C3H/HeJ, CBA/J, FVB/NJ, NON/ShiLtJ, NZO (NZO/HlLtJ) and SWR/J) and 5 (CAST/EiJ) confer macrophage susceptibility to LT. Strains with macrophages resistant to anthrax LT carry alleles 2 (A/J, C57BL/6J and I/LnJ), 3 (AKR/J, NOD/LtJ and SJL/J) or 4 (DBA/2J, P/J and SM/J). Sensitivity to LT leads to IL1B release, macrophage pyroptosis and neutrophil recruitment. This early inflammatory response confers increased resistance to infection by B. anthracis spores (PubMed:16429160). The sequence shown in this entry is that of allele 5 (PubMed:16429160).</text>
</comment>
<comment type="miscellaneous">
    <text evidence="8 13">Three tandem Nrlp1 paralogs, Nrlp1a, Nrlp1b and Nrlp1c, have been identified. Nlrp1c is predicted to be a pseudogene. Neither Nlrp1a, nor Nrlp1c are expressed in anthrax lethal toxin susceptible strains, hence neither of them is thought to play an important role in this phenotype.</text>
</comment>
<comment type="miscellaneous">
    <text evidence="1">In macrophages and dendritic cells, NLRP1 inflammasome activation of CASP1 and IL1B maturation can be dampened by direct contact with activated effector and memory T-cells. This effect may be mediated by hexameric TNF ligands, such as CD40LG.</text>
</comment>
<comment type="similarity">
    <text evidence="12">Belongs to the NLRP family.</text>
</comment>
<protein>
    <recommendedName>
        <fullName evidence="11">NACHT, LRR and PYD domains-containing protein 1b allele 5</fullName>
        <ecNumber evidence="1">3.4.-.-</ecNumber>
    </recommendedName>
    <component>
        <recommendedName>
            <fullName evidence="12">NACHT, LRR and PYD domains-containing protein 1b, C-terminus</fullName>
            <shortName evidence="12">Nlrp1b1-CT</shortName>
        </recommendedName>
    </component>
    <component>
        <recommendedName>
            <fullName evidence="12">NACHT, LRR and PYD domains-containing protein 1b, N-terminus</fullName>
            <shortName evidence="12">Nlrp1b1-NT</shortName>
        </recommendedName>
    </component>
</protein>
<keyword id="KW-0025">Alternative splicing</keyword>
<keyword id="KW-0067">ATP-binding</keyword>
<keyword id="KW-0963">Cytoplasm</keyword>
<keyword id="KW-0378">Hydrolase</keyword>
<keyword id="KW-0391">Immunity</keyword>
<keyword id="KW-1271">Inflammasome</keyword>
<keyword id="KW-0395">Inflammatory response</keyword>
<keyword id="KW-0399">Innate immunity</keyword>
<keyword id="KW-0433">Leucine-rich repeat</keyword>
<keyword id="KW-1210">Necrosis</keyword>
<keyword id="KW-0547">Nucleotide-binding</keyword>
<keyword id="KW-0645">Protease</keyword>
<keyword id="KW-0677">Repeat</keyword>
<keyword id="KW-0832">Ubl conjugation</keyword>
<reference key="1">
    <citation type="journal article" date="2006" name="Nat. Genet.">
        <title>Nalp1b controls mouse macrophage susceptibility to anthrax lethal toxin.</title>
        <authorList>
            <person name="Boyden E.D."/>
            <person name="Dietrich W.F."/>
        </authorList>
    </citation>
    <scope>NUCLEOTIDE SEQUENCE [MRNA] (ISOFORMS 1 AND 2)</scope>
    <scope>FUNCTION</scope>
    <scope>ACTIVITY REGULATION</scope>
    <scope>TISSUE SPECIFICITY</scope>
    <source>
        <strain>129S1/SvImJ</strain>
    </source>
</reference>
<reference key="2">
    <citation type="journal article" date="2013" name="BMC Genomics">
        <title>Transcriptional analysis of the three Nlrp1 paralogs in mice.</title>
        <authorList>
            <person name="Sastalla I."/>
            <person name="Crown D."/>
            <person name="Masters S.L."/>
            <person name="McKenzie A."/>
            <person name="Leppla S.H."/>
            <person name="Moayeri M."/>
        </authorList>
    </citation>
    <scope>TISSUE SPECIFICITY</scope>
</reference>
<reference key="3">
    <citation type="journal article" date="2014" name="Infect. Immun.">
        <title>Distinct regions of NLRP1B are required to respond to anthrax lethal toxin and metabolic inhibition.</title>
        <authorList>
            <person name="Neiman-Zenevich J."/>
            <person name="Liao K.C."/>
            <person name="Mogridge J."/>
        </authorList>
    </citation>
    <scope>ACTIVITY REGULATION</scope>
    <scope>FUNCTION</scope>
    <scope>ACTIVATION BY ANTHRAX LETHAL TOXIN AND METABOLIC INHIBITORS</scope>
</reference>
<reference key="4">
    <citation type="journal article" date="2019" name="Cell Death Dis.">
        <title>DPP8/9 inhibitors are universal activators of functional NLRP1 alleles.</title>
        <authorList>
            <person name="Gai K."/>
            <person name="Okondo M.C."/>
            <person name="Rao S.D."/>
            <person name="Chui A.J."/>
            <person name="Ball D.P."/>
            <person name="Johnson D.C."/>
            <person name="Bachovchin D.A."/>
        </authorList>
    </citation>
    <scope>FUNCTION</scope>
    <scope>ACTIVITY REGULATION</scope>
    <scope>PROTEOLYTIC CLEAVAGE</scope>
</reference>
<reference key="5">
    <citation type="journal article" date="2020" name="Immunol. Rev.">
        <title>The NLRP1 and CARD8 inflammasomes.</title>
        <authorList>
            <person name="Taabazuing C.Y."/>
            <person name="Griswold A.R."/>
            <person name="Bachovchin D.A."/>
        </authorList>
    </citation>
    <scope>REVIEW</scope>
</reference>
<dbReference type="EC" id="3.4.-.-" evidence="1"/>
<dbReference type="EMBL" id="DQ117600">
    <property type="protein sequence ID" value="AAZ40526.1"/>
    <property type="molecule type" value="mRNA"/>
</dbReference>
<dbReference type="EMBL" id="DQ860103">
    <property type="protein sequence ID" value="ABI18116.1"/>
    <property type="molecule type" value="mRNA"/>
</dbReference>
<dbReference type="EMBL" id="DQ860104">
    <property type="protein sequence ID" value="ABI18117.1"/>
    <property type="molecule type" value="mRNA"/>
</dbReference>
<dbReference type="SMR" id="Q0GKD5"/>
<dbReference type="ComplexPortal" id="CPX-4270">
    <property type="entry name" value="NLRP1b inflammasome, allele-5 variant"/>
</dbReference>
<dbReference type="MEROPS" id="S79.002"/>
<dbReference type="AGR" id="MGI:3582959"/>
<dbReference type="MGI" id="MGI:3582959">
    <property type="gene designation" value="Nlrp1b"/>
</dbReference>
<dbReference type="OrthoDB" id="428577at2759"/>
<dbReference type="GO" id="GO:0005737">
    <property type="term" value="C:cytoplasm"/>
    <property type="evidence" value="ECO:0000303"/>
    <property type="project" value="ComplexPortal"/>
</dbReference>
<dbReference type="GO" id="GO:0072558">
    <property type="term" value="C:NLRP1 inflammasome complex"/>
    <property type="evidence" value="ECO:0000303"/>
    <property type="project" value="ComplexPortal"/>
</dbReference>
<dbReference type="GO" id="GO:0005524">
    <property type="term" value="F:ATP binding"/>
    <property type="evidence" value="ECO:0007669"/>
    <property type="project" value="UniProtKB-KW"/>
</dbReference>
<dbReference type="GO" id="GO:0008233">
    <property type="term" value="F:peptidase activity"/>
    <property type="evidence" value="ECO:0007669"/>
    <property type="project" value="UniProtKB-KW"/>
</dbReference>
<dbReference type="GO" id="GO:0045087">
    <property type="term" value="P:innate immune response"/>
    <property type="evidence" value="ECO:0007669"/>
    <property type="project" value="UniProtKB-KW"/>
</dbReference>
<dbReference type="GO" id="GO:0002221">
    <property type="term" value="P:pattern recognition receptor signaling pathway"/>
    <property type="evidence" value="ECO:0000303"/>
    <property type="project" value="ComplexPortal"/>
</dbReference>
<dbReference type="GO" id="GO:0050729">
    <property type="term" value="P:positive regulation of inflammatory response"/>
    <property type="evidence" value="ECO:0000303"/>
    <property type="project" value="ComplexPortal"/>
</dbReference>
<dbReference type="GO" id="GO:0032731">
    <property type="term" value="P:positive regulation of interleukin-1 beta production"/>
    <property type="evidence" value="ECO:0000303"/>
    <property type="project" value="ComplexPortal"/>
</dbReference>
<dbReference type="GO" id="GO:0012501">
    <property type="term" value="P:programmed cell death"/>
    <property type="evidence" value="ECO:0007669"/>
    <property type="project" value="UniProtKB-KW"/>
</dbReference>
<dbReference type="GO" id="GO:0030163">
    <property type="term" value="P:protein catabolic process"/>
    <property type="evidence" value="ECO:0000315"/>
    <property type="project" value="MGI"/>
</dbReference>
<dbReference type="GO" id="GO:0006508">
    <property type="term" value="P:proteolysis"/>
    <property type="evidence" value="ECO:0007669"/>
    <property type="project" value="UniProtKB-KW"/>
</dbReference>
<dbReference type="GO" id="GO:0070269">
    <property type="term" value="P:pyroptotic inflammatory response"/>
    <property type="evidence" value="ECO:0000315"/>
    <property type="project" value="MGI"/>
</dbReference>
<dbReference type="GO" id="GO:0042981">
    <property type="term" value="P:regulation of apoptotic process"/>
    <property type="evidence" value="ECO:0007669"/>
    <property type="project" value="InterPro"/>
</dbReference>
<dbReference type="CDD" id="cd08330">
    <property type="entry name" value="CARD_ASC_NALP1"/>
    <property type="match status" value="1"/>
</dbReference>
<dbReference type="FunFam" id="1.10.533.10:FF:000013">
    <property type="entry name" value="Apoptosis-associated speck-like protein containing a CARD"/>
    <property type="match status" value="1"/>
</dbReference>
<dbReference type="FunFam" id="3.40.50.300:FF:000897">
    <property type="entry name" value="NLR family pyrin domain containing 1"/>
    <property type="match status" value="1"/>
</dbReference>
<dbReference type="FunFam" id="3.80.10.10:FF:000622">
    <property type="entry name" value="NLR family, pyrin domain containing 1B, PWK/PhJ specific, allele 1"/>
    <property type="match status" value="1"/>
</dbReference>
<dbReference type="Gene3D" id="1.10.533.10">
    <property type="entry name" value="Death Domain, Fas"/>
    <property type="match status" value="1"/>
</dbReference>
<dbReference type="Gene3D" id="3.40.50.300">
    <property type="entry name" value="P-loop containing nucleotide triphosphate hydrolases"/>
    <property type="match status" value="1"/>
</dbReference>
<dbReference type="Gene3D" id="3.80.10.10">
    <property type="entry name" value="Ribonuclease Inhibitor"/>
    <property type="match status" value="1"/>
</dbReference>
<dbReference type="InterPro" id="IPR001315">
    <property type="entry name" value="CARD"/>
</dbReference>
<dbReference type="InterPro" id="IPR033516">
    <property type="entry name" value="CARD8/ASC/NALP1_CARD"/>
</dbReference>
<dbReference type="InterPro" id="IPR011029">
    <property type="entry name" value="DEATH-like_dom_sf"/>
</dbReference>
<dbReference type="InterPro" id="IPR025307">
    <property type="entry name" value="FIIND_dom"/>
</dbReference>
<dbReference type="InterPro" id="IPR032675">
    <property type="entry name" value="LRR_dom_sf"/>
</dbReference>
<dbReference type="InterPro" id="IPR007111">
    <property type="entry name" value="NACHT_NTPase"/>
</dbReference>
<dbReference type="InterPro" id="IPR041267">
    <property type="entry name" value="NLRP_HD2"/>
</dbReference>
<dbReference type="InterPro" id="IPR051249">
    <property type="entry name" value="NLRP_Inflammasome"/>
</dbReference>
<dbReference type="InterPro" id="IPR041075">
    <property type="entry name" value="NOD1/2_WH"/>
</dbReference>
<dbReference type="InterPro" id="IPR027417">
    <property type="entry name" value="P-loop_NTPase"/>
</dbReference>
<dbReference type="PANTHER" id="PTHR46985">
    <property type="entry name" value="NACHT, LRR AND PYD DOMAINS-CONTAINING PROTEIN 1"/>
    <property type="match status" value="1"/>
</dbReference>
<dbReference type="PANTHER" id="PTHR46985:SF6">
    <property type="entry name" value="NACHT, LRR AND PYD DOMAINS-CONTAINING PROTEIN 1B ALLELE 2"/>
    <property type="match status" value="1"/>
</dbReference>
<dbReference type="Pfam" id="PF00619">
    <property type="entry name" value="CARD"/>
    <property type="match status" value="1"/>
</dbReference>
<dbReference type="Pfam" id="PF13553">
    <property type="entry name" value="FIIND"/>
    <property type="match status" value="1"/>
</dbReference>
<dbReference type="Pfam" id="PF05729">
    <property type="entry name" value="NACHT"/>
    <property type="match status" value="1"/>
</dbReference>
<dbReference type="Pfam" id="PF17776">
    <property type="entry name" value="NLRC4_HD2"/>
    <property type="match status" value="1"/>
</dbReference>
<dbReference type="Pfam" id="PF17779">
    <property type="entry name" value="NOD2_WH"/>
    <property type="match status" value="1"/>
</dbReference>
<dbReference type="Pfam" id="PF23679">
    <property type="entry name" value="UPA-FIIND"/>
    <property type="match status" value="1"/>
</dbReference>
<dbReference type="PRINTS" id="PR00364">
    <property type="entry name" value="DISEASERSIST"/>
</dbReference>
<dbReference type="SMART" id="SM00368">
    <property type="entry name" value="LRR_RI"/>
    <property type="match status" value="3"/>
</dbReference>
<dbReference type="SUPFAM" id="SSF47986">
    <property type="entry name" value="DEATH domain"/>
    <property type="match status" value="1"/>
</dbReference>
<dbReference type="SUPFAM" id="SSF52540">
    <property type="entry name" value="P-loop containing nucleoside triphosphate hydrolases"/>
    <property type="match status" value="1"/>
</dbReference>
<dbReference type="SUPFAM" id="SSF52047">
    <property type="entry name" value="RNI-like"/>
    <property type="match status" value="1"/>
</dbReference>
<dbReference type="PROSITE" id="PS50209">
    <property type="entry name" value="CARD"/>
    <property type="match status" value="1"/>
</dbReference>
<dbReference type="PROSITE" id="PS51830">
    <property type="entry name" value="FIIND"/>
    <property type="match status" value="1"/>
</dbReference>
<dbReference type="PROSITE" id="PS50837">
    <property type="entry name" value="NACHT"/>
    <property type="match status" value="1"/>
</dbReference>
<organism evidence="16">
    <name type="scientific">Mus musculus</name>
    <name type="common">Mouse</name>
    <dbReference type="NCBI Taxonomy" id="10090"/>
    <lineage>
        <taxon>Eukaryota</taxon>
        <taxon>Metazoa</taxon>
        <taxon>Chordata</taxon>
        <taxon>Craniata</taxon>
        <taxon>Vertebrata</taxon>
        <taxon>Euteleostomi</taxon>
        <taxon>Mammalia</taxon>
        <taxon>Eutheria</taxon>
        <taxon>Euarchontoglires</taxon>
        <taxon>Glires</taxon>
        <taxon>Rodentia</taxon>
        <taxon>Myomorpha</taxon>
        <taxon>Muroidea</taxon>
        <taxon>Muridae</taxon>
        <taxon>Murinae</taxon>
        <taxon>Mus</taxon>
        <taxon>Mus</taxon>
    </lineage>
</organism>